<proteinExistence type="inferred from homology"/>
<dbReference type="EC" id="2.4.2.7" evidence="1"/>
<dbReference type="EMBL" id="CP000560">
    <property type="protein sequence ID" value="ABS74832.1"/>
    <property type="molecule type" value="Genomic_DNA"/>
</dbReference>
<dbReference type="RefSeq" id="WP_003152714.1">
    <property type="nucleotide sequence ID" value="NC_009725.2"/>
</dbReference>
<dbReference type="SMR" id="A7Z756"/>
<dbReference type="GeneID" id="93081614"/>
<dbReference type="KEGG" id="bay:RBAM_024720"/>
<dbReference type="HOGENOM" id="CLU_063339_3_0_9"/>
<dbReference type="UniPathway" id="UPA00588">
    <property type="reaction ID" value="UER00646"/>
</dbReference>
<dbReference type="Proteomes" id="UP000001120">
    <property type="component" value="Chromosome"/>
</dbReference>
<dbReference type="GO" id="GO:0005737">
    <property type="term" value="C:cytoplasm"/>
    <property type="evidence" value="ECO:0007669"/>
    <property type="project" value="UniProtKB-SubCell"/>
</dbReference>
<dbReference type="GO" id="GO:0002055">
    <property type="term" value="F:adenine binding"/>
    <property type="evidence" value="ECO:0007669"/>
    <property type="project" value="TreeGrafter"/>
</dbReference>
<dbReference type="GO" id="GO:0003999">
    <property type="term" value="F:adenine phosphoribosyltransferase activity"/>
    <property type="evidence" value="ECO:0007669"/>
    <property type="project" value="UniProtKB-UniRule"/>
</dbReference>
<dbReference type="GO" id="GO:0016208">
    <property type="term" value="F:AMP binding"/>
    <property type="evidence" value="ECO:0007669"/>
    <property type="project" value="TreeGrafter"/>
</dbReference>
<dbReference type="GO" id="GO:0006168">
    <property type="term" value="P:adenine salvage"/>
    <property type="evidence" value="ECO:0007669"/>
    <property type="project" value="InterPro"/>
</dbReference>
<dbReference type="GO" id="GO:0044209">
    <property type="term" value="P:AMP salvage"/>
    <property type="evidence" value="ECO:0007669"/>
    <property type="project" value="UniProtKB-UniRule"/>
</dbReference>
<dbReference type="GO" id="GO:0006166">
    <property type="term" value="P:purine ribonucleoside salvage"/>
    <property type="evidence" value="ECO:0007669"/>
    <property type="project" value="UniProtKB-KW"/>
</dbReference>
<dbReference type="CDD" id="cd06223">
    <property type="entry name" value="PRTases_typeI"/>
    <property type="match status" value="1"/>
</dbReference>
<dbReference type="FunFam" id="3.40.50.2020:FF:000004">
    <property type="entry name" value="Adenine phosphoribosyltransferase"/>
    <property type="match status" value="1"/>
</dbReference>
<dbReference type="Gene3D" id="3.40.50.2020">
    <property type="match status" value="1"/>
</dbReference>
<dbReference type="HAMAP" id="MF_00004">
    <property type="entry name" value="Aden_phosphoribosyltr"/>
    <property type="match status" value="1"/>
</dbReference>
<dbReference type="InterPro" id="IPR005764">
    <property type="entry name" value="Ade_phspho_trans"/>
</dbReference>
<dbReference type="InterPro" id="IPR000836">
    <property type="entry name" value="PRibTrfase_dom"/>
</dbReference>
<dbReference type="InterPro" id="IPR029057">
    <property type="entry name" value="PRTase-like"/>
</dbReference>
<dbReference type="InterPro" id="IPR050054">
    <property type="entry name" value="UPRTase/APRTase"/>
</dbReference>
<dbReference type="NCBIfam" id="TIGR01090">
    <property type="entry name" value="apt"/>
    <property type="match status" value="1"/>
</dbReference>
<dbReference type="NCBIfam" id="NF002633">
    <property type="entry name" value="PRK02304.1-2"/>
    <property type="match status" value="1"/>
</dbReference>
<dbReference type="NCBIfam" id="NF002634">
    <property type="entry name" value="PRK02304.1-3"/>
    <property type="match status" value="1"/>
</dbReference>
<dbReference type="NCBIfam" id="NF002636">
    <property type="entry name" value="PRK02304.1-5"/>
    <property type="match status" value="1"/>
</dbReference>
<dbReference type="PANTHER" id="PTHR32315">
    <property type="entry name" value="ADENINE PHOSPHORIBOSYLTRANSFERASE"/>
    <property type="match status" value="1"/>
</dbReference>
<dbReference type="PANTHER" id="PTHR32315:SF3">
    <property type="entry name" value="ADENINE PHOSPHORIBOSYLTRANSFERASE"/>
    <property type="match status" value="1"/>
</dbReference>
<dbReference type="Pfam" id="PF00156">
    <property type="entry name" value="Pribosyltran"/>
    <property type="match status" value="1"/>
</dbReference>
<dbReference type="SUPFAM" id="SSF53271">
    <property type="entry name" value="PRTase-like"/>
    <property type="match status" value="1"/>
</dbReference>
<evidence type="ECO:0000255" key="1">
    <source>
        <dbReference type="HAMAP-Rule" id="MF_00004"/>
    </source>
</evidence>
<reference key="1">
    <citation type="journal article" date="2007" name="Nat. Biotechnol.">
        <title>Comparative analysis of the complete genome sequence of the plant growth-promoting bacterium Bacillus amyloliquefaciens FZB42.</title>
        <authorList>
            <person name="Chen X.H."/>
            <person name="Koumoutsi A."/>
            <person name="Scholz R."/>
            <person name="Eisenreich A."/>
            <person name="Schneider K."/>
            <person name="Heinemeyer I."/>
            <person name="Morgenstern B."/>
            <person name="Voss B."/>
            <person name="Hess W.R."/>
            <person name="Reva O."/>
            <person name="Junge H."/>
            <person name="Voigt B."/>
            <person name="Jungblut P.R."/>
            <person name="Vater J."/>
            <person name="Suessmuth R."/>
            <person name="Liesegang H."/>
            <person name="Strittmatter A."/>
            <person name="Gottschalk G."/>
            <person name="Borriss R."/>
        </authorList>
    </citation>
    <scope>NUCLEOTIDE SEQUENCE [LARGE SCALE GENOMIC DNA]</scope>
    <source>
        <strain>DSM 23117 / BGSC 10A6 / LMG 26770 / FZB42</strain>
    </source>
</reference>
<accession>A7Z756</accession>
<protein>
    <recommendedName>
        <fullName evidence="1">Adenine phosphoribosyltransferase</fullName>
        <shortName evidence="1">APRT</shortName>
        <ecNumber evidence="1">2.4.2.7</ecNumber>
    </recommendedName>
</protein>
<keyword id="KW-0963">Cytoplasm</keyword>
<keyword id="KW-0328">Glycosyltransferase</keyword>
<keyword id="KW-0660">Purine salvage</keyword>
<keyword id="KW-0808">Transferase</keyword>
<organism>
    <name type="scientific">Bacillus velezensis (strain DSM 23117 / BGSC 10A6 / LMG 26770 / FZB42)</name>
    <name type="common">Bacillus amyloliquefaciens subsp. plantarum</name>
    <dbReference type="NCBI Taxonomy" id="326423"/>
    <lineage>
        <taxon>Bacteria</taxon>
        <taxon>Bacillati</taxon>
        <taxon>Bacillota</taxon>
        <taxon>Bacilli</taxon>
        <taxon>Bacillales</taxon>
        <taxon>Bacillaceae</taxon>
        <taxon>Bacillus</taxon>
        <taxon>Bacillus amyloliquefaciens group</taxon>
    </lineage>
</organism>
<sequence>MDLKKYVTIVPDYPKEGVQFKDITTLMDKGDVYRYATDQIVEYAKEKEIDLVVGPEARGFIIGCPVAYALGVGFAPVRKEGKLPREVIKVDYGLEYGKDVLTIHKDAILPGQRVLITDDLLATGGTIEATIKLVEELGGVVAGIAFLIELSYLDGRDKLDDYDILTLMKY</sequence>
<name>APT_BACVZ</name>
<feature type="chain" id="PRO_1000000255" description="Adenine phosphoribosyltransferase">
    <location>
        <begin position="1"/>
        <end position="170"/>
    </location>
</feature>
<comment type="function">
    <text evidence="1">Catalyzes a salvage reaction resulting in the formation of AMP, that is energically less costly than de novo synthesis.</text>
</comment>
<comment type="catalytic activity">
    <reaction evidence="1">
        <text>AMP + diphosphate = 5-phospho-alpha-D-ribose 1-diphosphate + adenine</text>
        <dbReference type="Rhea" id="RHEA:16609"/>
        <dbReference type="ChEBI" id="CHEBI:16708"/>
        <dbReference type="ChEBI" id="CHEBI:33019"/>
        <dbReference type="ChEBI" id="CHEBI:58017"/>
        <dbReference type="ChEBI" id="CHEBI:456215"/>
        <dbReference type="EC" id="2.4.2.7"/>
    </reaction>
</comment>
<comment type="pathway">
    <text evidence="1">Purine metabolism; AMP biosynthesis via salvage pathway; AMP from adenine: step 1/1.</text>
</comment>
<comment type="subunit">
    <text evidence="1">Homodimer.</text>
</comment>
<comment type="subcellular location">
    <subcellularLocation>
        <location evidence="1">Cytoplasm</location>
    </subcellularLocation>
</comment>
<comment type="similarity">
    <text evidence="1">Belongs to the purine/pyrimidine phosphoribosyltransferase family.</text>
</comment>
<gene>
    <name evidence="1" type="primary">apt</name>
    <name type="ordered locus">RBAM_024720</name>
</gene>